<name>MURQ_ACTP2</name>
<accession>A3N2I4</accession>
<reference key="1">
    <citation type="journal article" date="2008" name="J. Bacteriol.">
        <title>The complete genome sequence of Actinobacillus pleuropneumoniae L20 (serotype 5b).</title>
        <authorList>
            <person name="Foote S.J."/>
            <person name="Bosse J.T."/>
            <person name="Bouevitch A.B."/>
            <person name="Langford P.R."/>
            <person name="Young N.M."/>
            <person name="Nash J.H.E."/>
        </authorList>
    </citation>
    <scope>NUCLEOTIDE SEQUENCE [LARGE SCALE GENOMIC DNA]</scope>
    <source>
        <strain>L20</strain>
    </source>
</reference>
<feature type="chain" id="PRO_1000009107" description="N-acetylmuramic acid 6-phosphate etherase">
    <location>
        <begin position="1"/>
        <end position="304"/>
    </location>
</feature>
<feature type="domain" description="SIS" evidence="1">
    <location>
        <begin position="62"/>
        <end position="225"/>
    </location>
</feature>
<feature type="active site" description="Proton donor" evidence="1">
    <location>
        <position position="90"/>
    </location>
</feature>
<feature type="active site" evidence="1">
    <location>
        <position position="121"/>
    </location>
</feature>
<sequence length="304" mass="32372">MSEKNLLTALSKMITEQRNPNSMNIDQLSALELVKVINQEDKQVPLAVEKCLAQIAQAVEKIVQAFQNGGRLVYIGAGTSGRLGVLDASECPPTYGVPPEIVVGIIAGGERALRHPIEGAEDNTERGKADLQAVNFSQKDVLVGIAASGRTPYVIGALEYAKSLGATTVSIASNPNSAMAQIAEIAIDTVVGPEVLTGSSRMKSGTAQKLVLNMLTTASMVMIGKCYSNLMVDVQASNEKLKARAIKIVMEATECDRTVAENTLKIAENNAKLAIMMILSDSDKTTAEQLLSKHHGKLRQALVN</sequence>
<gene>
    <name evidence="1" type="primary">murQ</name>
    <name type="ordered locus">APL_1536</name>
</gene>
<evidence type="ECO:0000255" key="1">
    <source>
        <dbReference type="HAMAP-Rule" id="MF_00068"/>
    </source>
</evidence>
<dbReference type="EC" id="4.2.1.126" evidence="1"/>
<dbReference type="EMBL" id="CP000569">
    <property type="protein sequence ID" value="ABN74620.1"/>
    <property type="molecule type" value="Genomic_DNA"/>
</dbReference>
<dbReference type="RefSeq" id="WP_009875244.1">
    <property type="nucleotide sequence ID" value="NC_009053.1"/>
</dbReference>
<dbReference type="SMR" id="A3N2I4"/>
<dbReference type="STRING" id="416269.APL_1536"/>
<dbReference type="EnsemblBacteria" id="ABN74620">
    <property type="protein sequence ID" value="ABN74620"/>
    <property type="gene ID" value="APL_1536"/>
</dbReference>
<dbReference type="KEGG" id="apl:APL_1536"/>
<dbReference type="PATRIC" id="fig|416269.6.peg.1599"/>
<dbReference type="eggNOG" id="COG2103">
    <property type="taxonomic scope" value="Bacteria"/>
</dbReference>
<dbReference type="HOGENOM" id="CLU_049049_1_1_6"/>
<dbReference type="UniPathway" id="UPA00342"/>
<dbReference type="UniPathway" id="UPA00343"/>
<dbReference type="UniPathway" id="UPA00544"/>
<dbReference type="Proteomes" id="UP000001432">
    <property type="component" value="Chromosome"/>
</dbReference>
<dbReference type="GO" id="GO:0097367">
    <property type="term" value="F:carbohydrate derivative binding"/>
    <property type="evidence" value="ECO:0007669"/>
    <property type="project" value="InterPro"/>
</dbReference>
<dbReference type="GO" id="GO:0016835">
    <property type="term" value="F:carbon-oxygen lyase activity"/>
    <property type="evidence" value="ECO:0007669"/>
    <property type="project" value="UniProtKB-UniRule"/>
</dbReference>
<dbReference type="GO" id="GO:0016803">
    <property type="term" value="F:ether hydrolase activity"/>
    <property type="evidence" value="ECO:0007669"/>
    <property type="project" value="TreeGrafter"/>
</dbReference>
<dbReference type="GO" id="GO:0097175">
    <property type="term" value="P:1,6-anhydro-N-acetyl-beta-muramic acid catabolic process"/>
    <property type="evidence" value="ECO:0007669"/>
    <property type="project" value="UniProtKB-UniRule"/>
</dbReference>
<dbReference type="GO" id="GO:0046348">
    <property type="term" value="P:amino sugar catabolic process"/>
    <property type="evidence" value="ECO:0007669"/>
    <property type="project" value="InterPro"/>
</dbReference>
<dbReference type="GO" id="GO:0097173">
    <property type="term" value="P:N-acetylmuramic acid catabolic process"/>
    <property type="evidence" value="ECO:0007669"/>
    <property type="project" value="UniProtKB-UniPathway"/>
</dbReference>
<dbReference type="GO" id="GO:0009254">
    <property type="term" value="P:peptidoglycan turnover"/>
    <property type="evidence" value="ECO:0007669"/>
    <property type="project" value="UniProtKB-UniRule"/>
</dbReference>
<dbReference type="CDD" id="cd05007">
    <property type="entry name" value="SIS_Etherase"/>
    <property type="match status" value="1"/>
</dbReference>
<dbReference type="FunFam" id="1.10.8.1080:FF:000001">
    <property type="entry name" value="N-acetylmuramic acid 6-phosphate etherase"/>
    <property type="match status" value="1"/>
</dbReference>
<dbReference type="FunFam" id="3.40.50.10490:FF:000014">
    <property type="entry name" value="N-acetylmuramic acid 6-phosphate etherase"/>
    <property type="match status" value="1"/>
</dbReference>
<dbReference type="Gene3D" id="1.10.8.1080">
    <property type="match status" value="1"/>
</dbReference>
<dbReference type="Gene3D" id="3.40.50.10490">
    <property type="entry name" value="Glucose-6-phosphate isomerase like protein, domain 1"/>
    <property type="match status" value="1"/>
</dbReference>
<dbReference type="HAMAP" id="MF_00068">
    <property type="entry name" value="MurQ"/>
    <property type="match status" value="1"/>
</dbReference>
<dbReference type="InterPro" id="IPR005488">
    <property type="entry name" value="Etherase_MurQ"/>
</dbReference>
<dbReference type="InterPro" id="IPR005486">
    <property type="entry name" value="Glucokinase_regulatory_CS"/>
</dbReference>
<dbReference type="InterPro" id="IPR040190">
    <property type="entry name" value="MURQ/GCKR"/>
</dbReference>
<dbReference type="InterPro" id="IPR001347">
    <property type="entry name" value="SIS_dom"/>
</dbReference>
<dbReference type="InterPro" id="IPR046348">
    <property type="entry name" value="SIS_dom_sf"/>
</dbReference>
<dbReference type="NCBIfam" id="TIGR00274">
    <property type="entry name" value="N-acetylmuramic acid 6-phosphate etherase"/>
    <property type="match status" value="1"/>
</dbReference>
<dbReference type="NCBIfam" id="NF003915">
    <property type="entry name" value="PRK05441.1"/>
    <property type="match status" value="1"/>
</dbReference>
<dbReference type="NCBIfam" id="NF009222">
    <property type="entry name" value="PRK12570.1"/>
    <property type="match status" value="1"/>
</dbReference>
<dbReference type="PANTHER" id="PTHR10088">
    <property type="entry name" value="GLUCOKINASE REGULATORY PROTEIN"/>
    <property type="match status" value="1"/>
</dbReference>
<dbReference type="PANTHER" id="PTHR10088:SF4">
    <property type="entry name" value="GLUCOKINASE REGULATORY PROTEIN"/>
    <property type="match status" value="1"/>
</dbReference>
<dbReference type="Pfam" id="PF22645">
    <property type="entry name" value="GKRP_SIS_N"/>
    <property type="match status" value="1"/>
</dbReference>
<dbReference type="SUPFAM" id="SSF53697">
    <property type="entry name" value="SIS domain"/>
    <property type="match status" value="1"/>
</dbReference>
<dbReference type="PROSITE" id="PS01272">
    <property type="entry name" value="GCKR"/>
    <property type="match status" value="1"/>
</dbReference>
<dbReference type="PROSITE" id="PS51464">
    <property type="entry name" value="SIS"/>
    <property type="match status" value="1"/>
</dbReference>
<keyword id="KW-0119">Carbohydrate metabolism</keyword>
<keyword id="KW-0456">Lyase</keyword>
<keyword id="KW-1185">Reference proteome</keyword>
<comment type="function">
    <text evidence="1">Specifically catalyzes the cleavage of the D-lactyl ether substituent of MurNAc 6-phosphate, producing GlcNAc 6-phosphate and D-lactate. Together with AnmK, is also required for the utilization of anhydro-N-acetylmuramic acid (anhMurNAc) either imported from the medium or derived from its own cell wall murein, and thus plays a role in cell wall recycling.</text>
</comment>
<comment type="catalytic activity">
    <reaction evidence="1">
        <text>N-acetyl-D-muramate 6-phosphate + H2O = N-acetyl-D-glucosamine 6-phosphate + (R)-lactate</text>
        <dbReference type="Rhea" id="RHEA:26410"/>
        <dbReference type="ChEBI" id="CHEBI:15377"/>
        <dbReference type="ChEBI" id="CHEBI:16004"/>
        <dbReference type="ChEBI" id="CHEBI:57513"/>
        <dbReference type="ChEBI" id="CHEBI:58722"/>
        <dbReference type="EC" id="4.2.1.126"/>
    </reaction>
</comment>
<comment type="pathway">
    <text evidence="1">Amino-sugar metabolism; 1,6-anhydro-N-acetylmuramate degradation.</text>
</comment>
<comment type="pathway">
    <text evidence="1">Amino-sugar metabolism; N-acetylmuramate degradation.</text>
</comment>
<comment type="pathway">
    <text evidence="1">Cell wall biogenesis; peptidoglycan recycling.</text>
</comment>
<comment type="subunit">
    <text evidence="1">Homodimer.</text>
</comment>
<comment type="miscellaneous">
    <text evidence="1">A lyase-type mechanism (elimination/hydration) is suggested for the cleavage of the lactyl ether bond of MurNAc 6-phosphate, with the formation of an alpha,beta-unsaturated aldehyde intermediate with (E)-stereochemistry, followed by the syn addition of water to give product.</text>
</comment>
<comment type="similarity">
    <text evidence="1">Belongs to the GCKR-like family. MurNAc-6-P etherase subfamily.</text>
</comment>
<protein>
    <recommendedName>
        <fullName evidence="1">N-acetylmuramic acid 6-phosphate etherase</fullName>
        <shortName evidence="1">MurNAc-6-P etherase</shortName>
        <ecNumber evidence="1">4.2.1.126</ecNumber>
    </recommendedName>
    <alternativeName>
        <fullName evidence="1">N-acetylmuramic acid 6-phosphate hydrolase</fullName>
    </alternativeName>
    <alternativeName>
        <fullName evidence="1">N-acetylmuramic acid 6-phosphate lyase</fullName>
    </alternativeName>
</protein>
<proteinExistence type="inferred from homology"/>
<organism>
    <name type="scientific">Actinobacillus pleuropneumoniae serotype 5b (strain L20)</name>
    <dbReference type="NCBI Taxonomy" id="416269"/>
    <lineage>
        <taxon>Bacteria</taxon>
        <taxon>Pseudomonadati</taxon>
        <taxon>Pseudomonadota</taxon>
        <taxon>Gammaproteobacteria</taxon>
        <taxon>Pasteurellales</taxon>
        <taxon>Pasteurellaceae</taxon>
        <taxon>Actinobacillus</taxon>
    </lineage>
</organism>